<dbReference type="EC" id="1.2.1.8" evidence="1"/>
<dbReference type="EMBL" id="BX936398">
    <property type="protein sequence ID" value="CAH20436.1"/>
    <property type="molecule type" value="Genomic_DNA"/>
</dbReference>
<dbReference type="RefSeq" id="WP_011191963.1">
    <property type="nucleotide sequence ID" value="NC_006155.1"/>
</dbReference>
<dbReference type="SMR" id="Q66D53"/>
<dbReference type="KEGG" id="ypo:BZ17_1331"/>
<dbReference type="KEGG" id="yps:YPTB1196"/>
<dbReference type="PATRIC" id="fig|273123.14.peg.1422"/>
<dbReference type="UniPathway" id="UPA00529">
    <property type="reaction ID" value="UER00386"/>
</dbReference>
<dbReference type="Proteomes" id="UP000001011">
    <property type="component" value="Chromosome"/>
</dbReference>
<dbReference type="GO" id="GO:0008802">
    <property type="term" value="F:betaine-aldehyde dehydrogenase (NAD+) activity"/>
    <property type="evidence" value="ECO:0007669"/>
    <property type="project" value="UniProtKB-UniRule"/>
</dbReference>
<dbReference type="GO" id="GO:0046872">
    <property type="term" value="F:metal ion binding"/>
    <property type="evidence" value="ECO:0007669"/>
    <property type="project" value="UniProtKB-KW"/>
</dbReference>
<dbReference type="GO" id="GO:0019285">
    <property type="term" value="P:glycine betaine biosynthetic process from choline"/>
    <property type="evidence" value="ECO:0007669"/>
    <property type="project" value="UniProtKB-UniRule"/>
</dbReference>
<dbReference type="CDD" id="cd07090">
    <property type="entry name" value="ALDH_F9_TMBADH"/>
    <property type="match status" value="1"/>
</dbReference>
<dbReference type="FunFam" id="3.40.309.10:FF:000014">
    <property type="entry name" value="NAD/NADP-dependent betaine aldehyde dehydrogenase"/>
    <property type="match status" value="1"/>
</dbReference>
<dbReference type="FunFam" id="3.40.605.10:FF:000007">
    <property type="entry name" value="NAD/NADP-dependent betaine aldehyde dehydrogenase"/>
    <property type="match status" value="1"/>
</dbReference>
<dbReference type="Gene3D" id="3.40.605.10">
    <property type="entry name" value="Aldehyde Dehydrogenase, Chain A, domain 1"/>
    <property type="match status" value="1"/>
</dbReference>
<dbReference type="Gene3D" id="3.40.309.10">
    <property type="entry name" value="Aldehyde Dehydrogenase, Chain A, domain 2"/>
    <property type="match status" value="1"/>
</dbReference>
<dbReference type="HAMAP" id="MF_00804">
    <property type="entry name" value="BADH"/>
    <property type="match status" value="1"/>
</dbReference>
<dbReference type="InterPro" id="IPR016161">
    <property type="entry name" value="Ald_DH/histidinol_DH"/>
</dbReference>
<dbReference type="InterPro" id="IPR016163">
    <property type="entry name" value="Ald_DH_C"/>
</dbReference>
<dbReference type="InterPro" id="IPR016160">
    <property type="entry name" value="Ald_DH_CS_CYS"/>
</dbReference>
<dbReference type="InterPro" id="IPR029510">
    <property type="entry name" value="Ald_DH_CS_GLU"/>
</dbReference>
<dbReference type="InterPro" id="IPR016162">
    <property type="entry name" value="Ald_DH_N"/>
</dbReference>
<dbReference type="InterPro" id="IPR015590">
    <property type="entry name" value="Aldehyde_DH_dom"/>
</dbReference>
<dbReference type="InterPro" id="IPR011264">
    <property type="entry name" value="BADH"/>
</dbReference>
<dbReference type="NCBIfam" id="TIGR01804">
    <property type="entry name" value="BADH"/>
    <property type="match status" value="1"/>
</dbReference>
<dbReference type="NCBIfam" id="NF009725">
    <property type="entry name" value="PRK13252.1"/>
    <property type="match status" value="1"/>
</dbReference>
<dbReference type="PANTHER" id="PTHR11699">
    <property type="entry name" value="ALDEHYDE DEHYDROGENASE-RELATED"/>
    <property type="match status" value="1"/>
</dbReference>
<dbReference type="Pfam" id="PF00171">
    <property type="entry name" value="Aldedh"/>
    <property type="match status" value="1"/>
</dbReference>
<dbReference type="SUPFAM" id="SSF53720">
    <property type="entry name" value="ALDH-like"/>
    <property type="match status" value="1"/>
</dbReference>
<dbReference type="PROSITE" id="PS00070">
    <property type="entry name" value="ALDEHYDE_DEHYDR_CYS"/>
    <property type="match status" value="1"/>
</dbReference>
<dbReference type="PROSITE" id="PS00687">
    <property type="entry name" value="ALDEHYDE_DEHYDR_GLU"/>
    <property type="match status" value="1"/>
</dbReference>
<reference key="1">
    <citation type="journal article" date="2004" name="Proc. Natl. Acad. Sci. U.S.A.">
        <title>Insights into the evolution of Yersinia pestis through whole-genome comparison with Yersinia pseudotuberculosis.</title>
        <authorList>
            <person name="Chain P.S.G."/>
            <person name="Carniel E."/>
            <person name="Larimer F.W."/>
            <person name="Lamerdin J."/>
            <person name="Stoutland P.O."/>
            <person name="Regala W.M."/>
            <person name="Georgescu A.M."/>
            <person name="Vergez L.M."/>
            <person name="Land M.L."/>
            <person name="Motin V.L."/>
            <person name="Brubaker R.R."/>
            <person name="Fowler J."/>
            <person name="Hinnebusch J."/>
            <person name="Marceau M."/>
            <person name="Medigue C."/>
            <person name="Simonet M."/>
            <person name="Chenal-Francisque V."/>
            <person name="Souza B."/>
            <person name="Dacheux D."/>
            <person name="Elliott J.M."/>
            <person name="Derbise A."/>
            <person name="Hauser L.J."/>
            <person name="Garcia E."/>
        </authorList>
    </citation>
    <scope>NUCLEOTIDE SEQUENCE [LARGE SCALE GENOMIC DNA]</scope>
    <source>
        <strain>IP32953</strain>
    </source>
</reference>
<evidence type="ECO:0000255" key="1">
    <source>
        <dbReference type="HAMAP-Rule" id="MF_00804"/>
    </source>
</evidence>
<keyword id="KW-0479">Metal-binding</keyword>
<keyword id="KW-0520">NAD</keyword>
<keyword id="KW-0521">NADP</keyword>
<keyword id="KW-0558">Oxidation</keyword>
<keyword id="KW-0560">Oxidoreductase</keyword>
<keyword id="KW-0630">Potassium</keyword>
<feature type="chain" id="PRO_0000056562" description="Betaine aldehyde dehydrogenase">
    <location>
        <begin position="1"/>
        <end position="490"/>
    </location>
</feature>
<feature type="active site" description="Charge relay system" evidence="1">
    <location>
        <position position="162"/>
    </location>
</feature>
<feature type="active site" description="Proton acceptor" evidence="1">
    <location>
        <position position="252"/>
    </location>
</feature>
<feature type="active site" description="Nucleophile" evidence="1">
    <location>
        <position position="286"/>
    </location>
</feature>
<feature type="active site" description="Charge relay system" evidence="1">
    <location>
        <position position="464"/>
    </location>
</feature>
<feature type="binding site" evidence="1">
    <location>
        <position position="93"/>
    </location>
    <ligand>
        <name>K(+)</name>
        <dbReference type="ChEBI" id="CHEBI:29103"/>
        <label>1</label>
    </ligand>
</feature>
<feature type="binding site" evidence="1">
    <location>
        <begin position="150"/>
        <end position="152"/>
    </location>
    <ligand>
        <name>NAD(+)</name>
        <dbReference type="ChEBI" id="CHEBI:57540"/>
    </ligand>
</feature>
<feature type="binding site" evidence="1">
    <location>
        <begin position="176"/>
        <end position="179"/>
    </location>
    <ligand>
        <name>NAD(+)</name>
        <dbReference type="ChEBI" id="CHEBI:57540"/>
    </ligand>
</feature>
<feature type="binding site" evidence="1">
    <location>
        <position position="180"/>
    </location>
    <ligand>
        <name>K(+)</name>
        <dbReference type="ChEBI" id="CHEBI:29103"/>
        <label>1</label>
    </ligand>
</feature>
<feature type="binding site" evidence="1">
    <location>
        <begin position="230"/>
        <end position="233"/>
    </location>
    <ligand>
        <name>NAD(+)</name>
        <dbReference type="ChEBI" id="CHEBI:57540"/>
    </ligand>
</feature>
<feature type="binding site" evidence="1">
    <location>
        <position position="246"/>
    </location>
    <ligand>
        <name>K(+)</name>
        <dbReference type="ChEBI" id="CHEBI:29103"/>
        <label>2</label>
    </ligand>
</feature>
<feature type="binding site" evidence="1">
    <location>
        <position position="254"/>
    </location>
    <ligand>
        <name>NAD(+)</name>
        <dbReference type="ChEBI" id="CHEBI:57540"/>
    </ligand>
</feature>
<feature type="binding site" description="covalent" evidence="1">
    <location>
        <position position="286"/>
    </location>
    <ligand>
        <name>NAD(+)</name>
        <dbReference type="ChEBI" id="CHEBI:57540"/>
    </ligand>
</feature>
<feature type="binding site" evidence="1">
    <location>
        <position position="387"/>
    </location>
    <ligand>
        <name>NAD(+)</name>
        <dbReference type="ChEBI" id="CHEBI:57540"/>
    </ligand>
</feature>
<feature type="binding site" evidence="1">
    <location>
        <position position="457"/>
    </location>
    <ligand>
        <name>K(+)</name>
        <dbReference type="ChEBI" id="CHEBI:29103"/>
        <label>2</label>
    </ligand>
</feature>
<feature type="binding site" evidence="1">
    <location>
        <position position="460"/>
    </location>
    <ligand>
        <name>K(+)</name>
        <dbReference type="ChEBI" id="CHEBI:29103"/>
        <label>2</label>
    </ligand>
</feature>
<feature type="site" description="Seems to be a necessary countercharge to the potassium cations" evidence="1">
    <location>
        <position position="248"/>
    </location>
</feature>
<feature type="modified residue" description="Cysteine sulfenic acid (-SOH)" evidence="1">
    <location>
        <position position="286"/>
    </location>
</feature>
<proteinExistence type="inferred from homology"/>
<protein>
    <recommendedName>
        <fullName evidence="1">Betaine aldehyde dehydrogenase</fullName>
        <shortName evidence="1">BADH</shortName>
        <ecNumber evidence="1">1.2.1.8</ecNumber>
    </recommendedName>
</protein>
<sequence>MSRYGLQKLYINGAYTDSTSGDTFDAVNPANGECIAQLQAANAQDVDKAVAAAKQGQPVWAAMTAMERSRILRRAVDILRDRNDELAAIETADTGKPLSETRSVDIVTGADVLEYYAGLIPALEGQQIPLRGSAFVYTRREPLGVVAGIGAWNYPLQIALWKSAPALAAGNAMIFKPSEVTSLTALKLAGIYTEAGLPAGVFNVLTGSGDQVGQMLTEHPGIAKVSFTGGIASGKKVMANAAGSTLKDVTMELGGKSPLIIFADADLDKAADIAMMANFYSSGQVCTNGTRVFVPLALQAAFEQKIVERVKRIHIGDPSDERTNFGPLVSFQHRDSVMRYIDSGKREGATLLIGGYSLTEGALAHGAYVAPTVFTHCRDDMQIVREEIFGPVMSILSYQSEEEVIRRANDTEYGLAAGVVTQDLNRAHRVIHQLQAGICWINTWGESAPEMPVGGYKHSGVGRENGISTLEHYTQIKSIQVELSSFNSVF</sequence>
<name>BETB_YERPS</name>
<organism>
    <name type="scientific">Yersinia pseudotuberculosis serotype I (strain IP32953)</name>
    <dbReference type="NCBI Taxonomy" id="273123"/>
    <lineage>
        <taxon>Bacteria</taxon>
        <taxon>Pseudomonadati</taxon>
        <taxon>Pseudomonadota</taxon>
        <taxon>Gammaproteobacteria</taxon>
        <taxon>Enterobacterales</taxon>
        <taxon>Yersiniaceae</taxon>
        <taxon>Yersinia</taxon>
    </lineage>
</organism>
<comment type="function">
    <text evidence="1">Involved in the biosynthesis of the osmoprotectant glycine betaine. Catalyzes the irreversible oxidation of betaine aldehyde to the corresponding acid.</text>
</comment>
<comment type="catalytic activity">
    <reaction evidence="1">
        <text>betaine aldehyde + NAD(+) + H2O = glycine betaine + NADH + 2 H(+)</text>
        <dbReference type="Rhea" id="RHEA:15305"/>
        <dbReference type="ChEBI" id="CHEBI:15377"/>
        <dbReference type="ChEBI" id="CHEBI:15378"/>
        <dbReference type="ChEBI" id="CHEBI:15710"/>
        <dbReference type="ChEBI" id="CHEBI:17750"/>
        <dbReference type="ChEBI" id="CHEBI:57540"/>
        <dbReference type="ChEBI" id="CHEBI:57945"/>
        <dbReference type="EC" id="1.2.1.8"/>
    </reaction>
    <physiologicalReaction direction="left-to-right" evidence="1">
        <dbReference type="Rhea" id="RHEA:15306"/>
    </physiologicalReaction>
</comment>
<comment type="cofactor">
    <cofactor evidence="1">
        <name>K(+)</name>
        <dbReference type="ChEBI" id="CHEBI:29103"/>
    </cofactor>
    <text evidence="1">Binds 2 potassium ions per subunit.</text>
</comment>
<comment type="pathway">
    <text evidence="1">Amine and polyamine biosynthesis; betaine biosynthesis via choline pathway; betaine from betaine aldehyde: step 1/1.</text>
</comment>
<comment type="subunit">
    <text evidence="1">Dimer of dimers.</text>
</comment>
<comment type="similarity">
    <text evidence="1">Belongs to the aldehyde dehydrogenase family.</text>
</comment>
<gene>
    <name evidence="1" type="primary">betB</name>
    <name type="ordered locus">YPTB1196</name>
</gene>
<accession>Q66D53</accession>